<feature type="chain" id="PRO_0000410084" description="Enhancer of polycomb-like protein 1">
    <location>
        <begin position="1"/>
        <end position="846"/>
    </location>
</feature>
<feature type="region of interest" description="Disordered" evidence="3">
    <location>
        <begin position="169"/>
        <end position="204"/>
    </location>
</feature>
<feature type="region of interest" description="Disordered" evidence="3">
    <location>
        <begin position="391"/>
        <end position="466"/>
    </location>
</feature>
<feature type="region of interest" description="Disordered" evidence="3">
    <location>
        <begin position="587"/>
        <end position="609"/>
    </location>
</feature>
<feature type="region of interest" description="Disordered" evidence="3">
    <location>
        <begin position="682"/>
        <end position="702"/>
    </location>
</feature>
<feature type="region of interest" description="Disordered" evidence="3">
    <location>
        <begin position="759"/>
        <end position="804"/>
    </location>
</feature>
<feature type="coiled-coil region" evidence="2">
    <location>
        <begin position="434"/>
        <end position="490"/>
    </location>
</feature>
<feature type="compositionally biased region" description="Basic and acidic residues" evidence="3">
    <location>
        <begin position="180"/>
        <end position="203"/>
    </location>
</feature>
<feature type="compositionally biased region" description="Polar residues" evidence="3">
    <location>
        <begin position="411"/>
        <end position="426"/>
    </location>
</feature>
<feature type="compositionally biased region" description="Basic and acidic residues" evidence="3">
    <location>
        <begin position="432"/>
        <end position="452"/>
    </location>
</feature>
<feature type="compositionally biased region" description="Pro residues" evidence="3">
    <location>
        <begin position="686"/>
        <end position="702"/>
    </location>
</feature>
<feature type="compositionally biased region" description="Low complexity" evidence="3">
    <location>
        <begin position="759"/>
        <end position="773"/>
    </location>
</feature>
<feature type="compositionally biased region" description="Polar residues" evidence="3">
    <location>
        <begin position="774"/>
        <end position="796"/>
    </location>
</feature>
<gene>
    <name type="primary">EPL1</name>
    <name type="ordered locus">CNBN0910</name>
</gene>
<reference key="1">
    <citation type="journal article" date="2005" name="Science">
        <title>The genome of the basidiomycetous yeast and human pathogen Cryptococcus neoformans.</title>
        <authorList>
            <person name="Loftus B.J."/>
            <person name="Fung E."/>
            <person name="Roncaglia P."/>
            <person name="Rowley D."/>
            <person name="Amedeo P."/>
            <person name="Bruno D."/>
            <person name="Vamathevan J."/>
            <person name="Miranda M."/>
            <person name="Anderson I.J."/>
            <person name="Fraser J.A."/>
            <person name="Allen J.E."/>
            <person name="Bosdet I.E."/>
            <person name="Brent M.R."/>
            <person name="Chiu R."/>
            <person name="Doering T.L."/>
            <person name="Donlin M.J."/>
            <person name="D'Souza C.A."/>
            <person name="Fox D.S."/>
            <person name="Grinberg V."/>
            <person name="Fu J."/>
            <person name="Fukushima M."/>
            <person name="Haas B.J."/>
            <person name="Huang J.C."/>
            <person name="Janbon G."/>
            <person name="Jones S.J.M."/>
            <person name="Koo H.L."/>
            <person name="Krzywinski M.I."/>
            <person name="Kwon-Chung K.J."/>
            <person name="Lengeler K.B."/>
            <person name="Maiti R."/>
            <person name="Marra M.A."/>
            <person name="Marra R.E."/>
            <person name="Mathewson C.A."/>
            <person name="Mitchell T.G."/>
            <person name="Pertea M."/>
            <person name="Riggs F.R."/>
            <person name="Salzberg S.L."/>
            <person name="Schein J.E."/>
            <person name="Shvartsbeyn A."/>
            <person name="Shin H."/>
            <person name="Shumway M."/>
            <person name="Specht C.A."/>
            <person name="Suh B.B."/>
            <person name="Tenney A."/>
            <person name="Utterback T.R."/>
            <person name="Wickes B.L."/>
            <person name="Wortman J.R."/>
            <person name="Wye N.H."/>
            <person name="Kronstad J.W."/>
            <person name="Lodge J.K."/>
            <person name="Heitman J."/>
            <person name="Davis R.W."/>
            <person name="Fraser C.M."/>
            <person name="Hyman R.W."/>
        </authorList>
    </citation>
    <scope>NUCLEOTIDE SEQUENCE [LARGE SCALE GENOMIC DNA]</scope>
    <source>
        <strain>B-3501A</strain>
    </source>
</reference>
<accession>P0CN59</accession>
<accession>Q55HM9</accession>
<accession>Q5K767</accession>
<sequence>MVAPGRMVTSSRRIGRVTNKTKLIIYRGSDKVDTSAAETVLWDQEAGGAGKDSNKHQHIGATGVESGELLEHHLQAALSSASLLHSSNKPSSPKSVKEAPAAALNYHIPTPDATGLVSDTVFSQLYQRTKYVEPYNFIRFSDTVEESSCGWGGLGYCMDDADERWLNDFNSKAEGSSGDVKSDKEQGRGMRVKGKDREKEKGDAPAPLVISEDMFEYIMGVFEKYTEENAPMLHTDLSLLPPFSAVENMFSTPISPAFLPSNEIPKELGDLKACARMARNVYPHWKSRREQRQGKSILPQLNYDETNDNDPYVCFRRRDIRATRKTRRTDNFSIEQFQKLQFELRSAHALADRVLTREREKKSLYEAEKELWEARWKFFETKRRWPSLGMTSDEEHKITGRPTIVPPIQIPSLSGQTPLTSGQSSSHMRKRTDKDREERAQRERYDAQRNAERSGILSGRSNAPDALKERLQALQQKTEEMLARKKEQDAHWDDSIDSPYQPLPPSNSVHAFRSLFVLDPCRAQCKDSETGNEILHPESFRIRRGRGGIVRLDRRTSIYSHRRGIQPTSPSEYPTWLFPDIAPRRSEKKRPRSIDEVEEEMQEQSPKAMRKDLNETWRYDVDRGGAVGVGMGLEEDYDRVIIDDLEAKYIRHRISLLQESDCAKLRPDNYILDQTREALDAAADAKPPPAPIFQKPPAPQPNPQLLAAHLQQQQMLAQQQQMEQFQRFQLMAQQQAMAQAQAQAQAQAQAQAQAQAQAQVQAQGQGHPQAHLQTHPQGVSQPNGVNSPMPNGQQMLPPSDGVKQLKLPPHAVARLGAAMANANANANGGLHVLQQQQQQHAQTSQQ</sequence>
<organism>
    <name type="scientific">Cryptococcus neoformans var. neoformans serotype D (strain B-3501A)</name>
    <name type="common">Filobasidiella neoformans</name>
    <dbReference type="NCBI Taxonomy" id="283643"/>
    <lineage>
        <taxon>Eukaryota</taxon>
        <taxon>Fungi</taxon>
        <taxon>Dikarya</taxon>
        <taxon>Basidiomycota</taxon>
        <taxon>Agaricomycotina</taxon>
        <taxon>Tremellomycetes</taxon>
        <taxon>Tremellales</taxon>
        <taxon>Cryptococcaceae</taxon>
        <taxon>Cryptococcus</taxon>
        <taxon>Cryptococcus neoformans species complex</taxon>
    </lineage>
</organism>
<evidence type="ECO:0000250" key="1"/>
<evidence type="ECO:0000255" key="2"/>
<evidence type="ECO:0000256" key="3">
    <source>
        <dbReference type="SAM" id="MobiDB-lite"/>
    </source>
</evidence>
<evidence type="ECO:0000305" key="4"/>
<protein>
    <recommendedName>
        <fullName>Enhancer of polycomb-like protein 1</fullName>
    </recommendedName>
</protein>
<keyword id="KW-0131">Cell cycle</keyword>
<keyword id="KW-0175">Coiled coil</keyword>
<keyword id="KW-0227">DNA damage</keyword>
<keyword id="KW-0234">DNA repair</keyword>
<keyword id="KW-0539">Nucleus</keyword>
<keyword id="KW-0804">Transcription</keyword>
<keyword id="KW-0805">Transcription regulation</keyword>
<comment type="function">
    <text evidence="1">Component of the NuA4 histone acetyltransferase complex which is involved in transcriptional activation of selected genes principally by acetylation of nucleosomal histone H4 and H2A. The NuA4 complex is also involved in DNA repair. Involved in gene silencing by neighboring heterochromatin, blockage of the silencing spreading along the chromosome, and required for cell cycle progression through G2/M (By similarity).</text>
</comment>
<comment type="subunit">
    <text evidence="1">Component of the NuA4 histone acetyltransferase complex.</text>
</comment>
<comment type="subcellular location">
    <subcellularLocation>
        <location evidence="1">Nucleus</location>
    </subcellularLocation>
</comment>
<comment type="similarity">
    <text evidence="4">Belongs to the enhancer of polycomb family.</text>
</comment>
<proteinExistence type="inferred from homology"/>
<dbReference type="EMBL" id="AAEY01000066">
    <property type="protein sequence ID" value="EAL17264.1"/>
    <property type="molecule type" value="Genomic_DNA"/>
</dbReference>
<dbReference type="RefSeq" id="XP_771911.1">
    <property type="nucleotide sequence ID" value="XM_766818.1"/>
</dbReference>
<dbReference type="GeneID" id="4939700"/>
<dbReference type="KEGG" id="cnb:CNBN0910"/>
<dbReference type="VEuPathDB" id="FungiDB:CNBN0910"/>
<dbReference type="HOGENOM" id="CLU_336162_0_0_1"/>
<dbReference type="OrthoDB" id="8086at5206"/>
<dbReference type="GO" id="GO:0035267">
    <property type="term" value="C:NuA4 histone acetyltransferase complex"/>
    <property type="evidence" value="ECO:0007669"/>
    <property type="project" value="InterPro"/>
</dbReference>
<dbReference type="GO" id="GO:0005634">
    <property type="term" value="C:nucleus"/>
    <property type="evidence" value="ECO:0007669"/>
    <property type="project" value="UniProtKB-SubCell"/>
</dbReference>
<dbReference type="GO" id="GO:0006281">
    <property type="term" value="P:DNA repair"/>
    <property type="evidence" value="ECO:0007669"/>
    <property type="project" value="UniProtKB-KW"/>
</dbReference>
<dbReference type="GO" id="GO:0006357">
    <property type="term" value="P:regulation of transcription by RNA polymerase II"/>
    <property type="evidence" value="ECO:0007669"/>
    <property type="project" value="InterPro"/>
</dbReference>
<dbReference type="InterPro" id="IPR024943">
    <property type="entry name" value="Enhancer_polycomb"/>
</dbReference>
<dbReference type="InterPro" id="IPR019542">
    <property type="entry name" value="Enhancer_polycomb-like_N"/>
</dbReference>
<dbReference type="PANTHER" id="PTHR14898">
    <property type="entry name" value="ENHANCER OF POLYCOMB"/>
    <property type="match status" value="1"/>
</dbReference>
<dbReference type="Pfam" id="PF10513">
    <property type="entry name" value="EPL1"/>
    <property type="match status" value="1"/>
</dbReference>
<name>EPL1_CRYNB</name>